<reference key="1">
    <citation type="submission" date="2008-02" db="EMBL/GenBank/DDBJ databases">
        <title>Complete sequence of chromosome 1 of Burkholderia cenocepacia MC0-3.</title>
        <authorList>
            <person name="Copeland A."/>
            <person name="Lucas S."/>
            <person name="Lapidus A."/>
            <person name="Barry K."/>
            <person name="Bruce D."/>
            <person name="Goodwin L."/>
            <person name="Glavina del Rio T."/>
            <person name="Dalin E."/>
            <person name="Tice H."/>
            <person name="Pitluck S."/>
            <person name="Chain P."/>
            <person name="Malfatti S."/>
            <person name="Shin M."/>
            <person name="Vergez L."/>
            <person name="Schmutz J."/>
            <person name="Larimer F."/>
            <person name="Land M."/>
            <person name="Hauser L."/>
            <person name="Kyrpides N."/>
            <person name="Mikhailova N."/>
            <person name="Tiedje J."/>
            <person name="Richardson P."/>
        </authorList>
    </citation>
    <scope>NUCLEOTIDE SEQUENCE [LARGE SCALE GENOMIC DNA]</scope>
    <source>
        <strain>MC0-3</strain>
    </source>
</reference>
<dbReference type="EC" id="2.5.1.72" evidence="1"/>
<dbReference type="EMBL" id="CP000958">
    <property type="protein sequence ID" value="ACA91692.1"/>
    <property type="molecule type" value="Genomic_DNA"/>
</dbReference>
<dbReference type="RefSeq" id="WP_012329066.1">
    <property type="nucleotide sequence ID" value="NC_010508.1"/>
</dbReference>
<dbReference type="SMR" id="B1JXB7"/>
<dbReference type="GeneID" id="83049320"/>
<dbReference type="KEGG" id="bcm:Bcenmc03_2531"/>
<dbReference type="HOGENOM" id="CLU_047382_1_0_4"/>
<dbReference type="UniPathway" id="UPA00253">
    <property type="reaction ID" value="UER00327"/>
</dbReference>
<dbReference type="Proteomes" id="UP000002169">
    <property type="component" value="Chromosome 1"/>
</dbReference>
<dbReference type="GO" id="GO:0005829">
    <property type="term" value="C:cytosol"/>
    <property type="evidence" value="ECO:0007669"/>
    <property type="project" value="TreeGrafter"/>
</dbReference>
<dbReference type="GO" id="GO:0051539">
    <property type="term" value="F:4 iron, 4 sulfur cluster binding"/>
    <property type="evidence" value="ECO:0007669"/>
    <property type="project" value="UniProtKB-KW"/>
</dbReference>
<dbReference type="GO" id="GO:0046872">
    <property type="term" value="F:metal ion binding"/>
    <property type="evidence" value="ECO:0007669"/>
    <property type="project" value="UniProtKB-KW"/>
</dbReference>
<dbReference type="GO" id="GO:0008987">
    <property type="term" value="F:quinolinate synthetase A activity"/>
    <property type="evidence" value="ECO:0007669"/>
    <property type="project" value="UniProtKB-UniRule"/>
</dbReference>
<dbReference type="GO" id="GO:0034628">
    <property type="term" value="P:'de novo' NAD biosynthetic process from L-aspartate"/>
    <property type="evidence" value="ECO:0007669"/>
    <property type="project" value="TreeGrafter"/>
</dbReference>
<dbReference type="FunFam" id="3.40.50.10800:FF:000001">
    <property type="entry name" value="Quinolinate synthase A"/>
    <property type="match status" value="1"/>
</dbReference>
<dbReference type="FunFam" id="3.40.50.10800:FF:000003">
    <property type="entry name" value="Quinolinate synthase A"/>
    <property type="match status" value="1"/>
</dbReference>
<dbReference type="Gene3D" id="3.40.50.10800">
    <property type="entry name" value="NadA-like"/>
    <property type="match status" value="3"/>
</dbReference>
<dbReference type="HAMAP" id="MF_00567">
    <property type="entry name" value="NadA_type1"/>
    <property type="match status" value="1"/>
</dbReference>
<dbReference type="InterPro" id="IPR003473">
    <property type="entry name" value="NadA"/>
</dbReference>
<dbReference type="InterPro" id="IPR036094">
    <property type="entry name" value="NadA_sf"/>
</dbReference>
<dbReference type="InterPro" id="IPR023513">
    <property type="entry name" value="Quinolinate_synth_A_type1"/>
</dbReference>
<dbReference type="NCBIfam" id="TIGR00550">
    <property type="entry name" value="nadA"/>
    <property type="match status" value="1"/>
</dbReference>
<dbReference type="NCBIfam" id="NF006877">
    <property type="entry name" value="PRK09375.1-1"/>
    <property type="match status" value="1"/>
</dbReference>
<dbReference type="NCBIfam" id="NF006878">
    <property type="entry name" value="PRK09375.1-2"/>
    <property type="match status" value="1"/>
</dbReference>
<dbReference type="PANTHER" id="PTHR30573:SF0">
    <property type="entry name" value="QUINOLINATE SYNTHASE, CHLOROPLASTIC"/>
    <property type="match status" value="1"/>
</dbReference>
<dbReference type="PANTHER" id="PTHR30573">
    <property type="entry name" value="QUINOLINATE SYNTHETASE A"/>
    <property type="match status" value="1"/>
</dbReference>
<dbReference type="Pfam" id="PF02445">
    <property type="entry name" value="NadA"/>
    <property type="match status" value="1"/>
</dbReference>
<dbReference type="SUPFAM" id="SSF142754">
    <property type="entry name" value="NadA-like"/>
    <property type="match status" value="1"/>
</dbReference>
<evidence type="ECO:0000255" key="1">
    <source>
        <dbReference type="HAMAP-Rule" id="MF_00567"/>
    </source>
</evidence>
<gene>
    <name evidence="1" type="primary">nadA</name>
    <name type="ordered locus">Bcenmc03_2531</name>
</gene>
<accession>B1JXB7</accession>
<sequence>MQSTIKPVEYDRPVAAGTVCGVGQAWAKVPDAPSAEERAALKARIKALLAREKAVLVAHYYVDAELQELADETGGCVADSLEMARFGRDHDAQTLVVAGVRFMGETAKILSPNKRILMPDLDATCSLDLGCPVGEFSAFCDAHPDRTVVVYANTSAAVKARADWMVTSSIGLEIVADLHARGEKIIWAPDRHLGSYIQKKTGADMLLWQGSCLVHDEFKGIELDLLRAEYPDAKVLVHPESPENVVAQADVVGSTTQLIDAAVKFDAKRFIVATDLGILHKMQLAAPGKTFIAAPTAGNSATCKSCAHCPWMAMNGLANLADVLERGHNEIFVDPAIGERARLPIDRMLEFAAAHKKRVQASGDLQRDQSLFANVGAA</sequence>
<keyword id="KW-0004">4Fe-4S</keyword>
<keyword id="KW-0963">Cytoplasm</keyword>
<keyword id="KW-0408">Iron</keyword>
<keyword id="KW-0411">Iron-sulfur</keyword>
<keyword id="KW-0479">Metal-binding</keyword>
<keyword id="KW-0662">Pyridine nucleotide biosynthesis</keyword>
<keyword id="KW-0808">Transferase</keyword>
<comment type="function">
    <text evidence="1">Catalyzes the condensation of iminoaspartate with dihydroxyacetone phosphate to form quinolinate.</text>
</comment>
<comment type="catalytic activity">
    <reaction evidence="1">
        <text>iminosuccinate + dihydroxyacetone phosphate = quinolinate + phosphate + 2 H2O + H(+)</text>
        <dbReference type="Rhea" id="RHEA:25888"/>
        <dbReference type="ChEBI" id="CHEBI:15377"/>
        <dbReference type="ChEBI" id="CHEBI:15378"/>
        <dbReference type="ChEBI" id="CHEBI:29959"/>
        <dbReference type="ChEBI" id="CHEBI:43474"/>
        <dbReference type="ChEBI" id="CHEBI:57642"/>
        <dbReference type="ChEBI" id="CHEBI:77875"/>
        <dbReference type="EC" id="2.5.1.72"/>
    </reaction>
    <physiologicalReaction direction="left-to-right" evidence="1">
        <dbReference type="Rhea" id="RHEA:25889"/>
    </physiologicalReaction>
</comment>
<comment type="cofactor">
    <cofactor evidence="1">
        <name>[4Fe-4S] cluster</name>
        <dbReference type="ChEBI" id="CHEBI:49883"/>
    </cofactor>
    <text evidence="1">Binds 1 [4Fe-4S] cluster per subunit.</text>
</comment>
<comment type="pathway">
    <text evidence="1">Cofactor biosynthesis; NAD(+) biosynthesis; quinolinate from iminoaspartate: step 1/1.</text>
</comment>
<comment type="subcellular location">
    <subcellularLocation>
        <location evidence="1">Cytoplasm</location>
    </subcellularLocation>
</comment>
<comment type="similarity">
    <text evidence="1">Belongs to the quinolinate synthase family. Type 1 subfamily.</text>
</comment>
<organism>
    <name type="scientific">Burkholderia orbicola (strain MC0-3)</name>
    <dbReference type="NCBI Taxonomy" id="406425"/>
    <lineage>
        <taxon>Bacteria</taxon>
        <taxon>Pseudomonadati</taxon>
        <taxon>Pseudomonadota</taxon>
        <taxon>Betaproteobacteria</taxon>
        <taxon>Burkholderiales</taxon>
        <taxon>Burkholderiaceae</taxon>
        <taxon>Burkholderia</taxon>
        <taxon>Burkholderia cepacia complex</taxon>
        <taxon>Burkholderia orbicola</taxon>
    </lineage>
</organism>
<name>NADA_BURO0</name>
<proteinExistence type="inferred from homology"/>
<protein>
    <recommendedName>
        <fullName evidence="1">Quinolinate synthase</fullName>
        <ecNumber evidence="1">2.5.1.72</ecNumber>
    </recommendedName>
</protein>
<feature type="chain" id="PRO_1000129408" description="Quinolinate synthase">
    <location>
        <begin position="1"/>
        <end position="378"/>
    </location>
</feature>
<feature type="binding site" evidence="1">
    <location>
        <position position="59"/>
    </location>
    <ligand>
        <name>iminosuccinate</name>
        <dbReference type="ChEBI" id="CHEBI:77875"/>
    </ligand>
</feature>
<feature type="binding site" evidence="1">
    <location>
        <position position="80"/>
    </location>
    <ligand>
        <name>iminosuccinate</name>
        <dbReference type="ChEBI" id="CHEBI:77875"/>
    </ligand>
</feature>
<feature type="binding site" evidence="1">
    <location>
        <position position="125"/>
    </location>
    <ligand>
        <name>[4Fe-4S] cluster</name>
        <dbReference type="ChEBI" id="CHEBI:49883"/>
    </ligand>
</feature>
<feature type="binding site" evidence="1">
    <location>
        <begin position="151"/>
        <end position="153"/>
    </location>
    <ligand>
        <name>iminosuccinate</name>
        <dbReference type="ChEBI" id="CHEBI:77875"/>
    </ligand>
</feature>
<feature type="binding site" evidence="1">
    <location>
        <position position="168"/>
    </location>
    <ligand>
        <name>iminosuccinate</name>
        <dbReference type="ChEBI" id="CHEBI:77875"/>
    </ligand>
</feature>
<feature type="binding site" evidence="1">
    <location>
        <position position="212"/>
    </location>
    <ligand>
        <name>[4Fe-4S] cluster</name>
        <dbReference type="ChEBI" id="CHEBI:49883"/>
    </ligand>
</feature>
<feature type="binding site" evidence="1">
    <location>
        <begin position="238"/>
        <end position="240"/>
    </location>
    <ligand>
        <name>iminosuccinate</name>
        <dbReference type="ChEBI" id="CHEBI:77875"/>
    </ligand>
</feature>
<feature type="binding site" evidence="1">
    <location>
        <position position="255"/>
    </location>
    <ligand>
        <name>iminosuccinate</name>
        <dbReference type="ChEBI" id="CHEBI:77875"/>
    </ligand>
</feature>
<feature type="binding site" evidence="1">
    <location>
        <position position="309"/>
    </location>
    <ligand>
        <name>[4Fe-4S] cluster</name>
        <dbReference type="ChEBI" id="CHEBI:49883"/>
    </ligand>
</feature>